<gene>
    <name evidence="1" type="primary">arnD</name>
    <name type="ordered locus">KPK_0269</name>
</gene>
<name>ARND_KLEP3</name>
<accession>B5XTL0</accession>
<keyword id="KW-0046">Antibiotic resistance</keyword>
<keyword id="KW-0378">Hydrolase</keyword>
<keyword id="KW-0441">Lipid A biosynthesis</keyword>
<keyword id="KW-0444">Lipid biosynthesis</keyword>
<keyword id="KW-0443">Lipid metabolism</keyword>
<keyword id="KW-0448">Lipopolysaccharide biosynthesis</keyword>
<evidence type="ECO:0000255" key="1">
    <source>
        <dbReference type="HAMAP-Rule" id="MF_01870"/>
    </source>
</evidence>
<sequence length="300" mass="33397">MKQVGLRIDVDTFRGTRDGVPRLLDLLGQHGIQASFFFSVGPDNMGRHLWRLVKPKFLWKMLRSRAASLYGWDILLAGTAWPGRRIGAGNEAVIRAAAESHEVGLHAWDHYSWQAWSGVWPQERLALEVERGLLELERIIGRPVTCSAVAGWRADQRVVKAKESFDFLYNSDCRGTRPFLPQLGSGTFGTVQIPVTLPTWDEAVGTAVDIAGFNRYLLDCIHRDPGVPVYTIHAEVEGIAYADQFNELLTMAAEEEIQFCPLSQLLPADFSELPSGKVVRGELAGREGWLGREQLLTSGV</sequence>
<organism>
    <name type="scientific">Klebsiella pneumoniae (strain 342)</name>
    <dbReference type="NCBI Taxonomy" id="507522"/>
    <lineage>
        <taxon>Bacteria</taxon>
        <taxon>Pseudomonadati</taxon>
        <taxon>Pseudomonadota</taxon>
        <taxon>Gammaproteobacteria</taxon>
        <taxon>Enterobacterales</taxon>
        <taxon>Enterobacteriaceae</taxon>
        <taxon>Klebsiella/Raoultella group</taxon>
        <taxon>Klebsiella</taxon>
        <taxon>Klebsiella pneumoniae complex</taxon>
    </lineage>
</organism>
<feature type="chain" id="PRO_0000383515" description="Probable 4-deoxy-4-formamido-L-arabinose-phosphoundecaprenol deformylase ArnD">
    <location>
        <begin position="1"/>
        <end position="300"/>
    </location>
</feature>
<feature type="domain" description="NodB homology" evidence="1">
    <location>
        <begin position="2"/>
        <end position="260"/>
    </location>
</feature>
<protein>
    <recommendedName>
        <fullName evidence="1">Probable 4-deoxy-4-formamido-L-arabinose-phosphoundecaprenol deformylase ArnD</fullName>
        <ecNumber evidence="1">3.5.1.n3</ecNumber>
    </recommendedName>
</protein>
<reference key="1">
    <citation type="journal article" date="2008" name="PLoS Genet.">
        <title>Complete genome sequence of the N2-fixing broad host range endophyte Klebsiella pneumoniae 342 and virulence predictions verified in mice.</title>
        <authorList>
            <person name="Fouts D.E."/>
            <person name="Tyler H.L."/>
            <person name="DeBoy R.T."/>
            <person name="Daugherty S."/>
            <person name="Ren Q."/>
            <person name="Badger J.H."/>
            <person name="Durkin A.S."/>
            <person name="Huot H."/>
            <person name="Shrivastava S."/>
            <person name="Kothari S."/>
            <person name="Dodson R.J."/>
            <person name="Mohamoud Y."/>
            <person name="Khouri H."/>
            <person name="Roesch L.F.W."/>
            <person name="Krogfelt K.A."/>
            <person name="Struve C."/>
            <person name="Triplett E.W."/>
            <person name="Methe B.A."/>
        </authorList>
    </citation>
    <scope>NUCLEOTIDE SEQUENCE [LARGE SCALE GENOMIC DNA]</scope>
    <source>
        <strain>342</strain>
    </source>
</reference>
<dbReference type="EC" id="3.5.1.n3" evidence="1"/>
<dbReference type="EMBL" id="CP000964">
    <property type="protein sequence ID" value="ACI06567.1"/>
    <property type="molecule type" value="Genomic_DNA"/>
</dbReference>
<dbReference type="SMR" id="B5XTL0"/>
<dbReference type="KEGG" id="kpe:KPK_0269"/>
<dbReference type="HOGENOM" id="CLU_084199_0_0_6"/>
<dbReference type="UniPathway" id="UPA00030"/>
<dbReference type="UniPathway" id="UPA00036">
    <property type="reaction ID" value="UER00496"/>
</dbReference>
<dbReference type="Proteomes" id="UP000001734">
    <property type="component" value="Chromosome"/>
</dbReference>
<dbReference type="GO" id="GO:0016020">
    <property type="term" value="C:membrane"/>
    <property type="evidence" value="ECO:0007669"/>
    <property type="project" value="GOC"/>
</dbReference>
<dbReference type="GO" id="GO:0016811">
    <property type="term" value="F:hydrolase activity, acting on carbon-nitrogen (but not peptide) bonds, in linear amides"/>
    <property type="evidence" value="ECO:0007669"/>
    <property type="project" value="UniProtKB-UniRule"/>
</dbReference>
<dbReference type="GO" id="GO:0036108">
    <property type="term" value="P:4-amino-4-deoxy-alpha-L-arabinopyranosyl undecaprenyl phosphate biosynthetic process"/>
    <property type="evidence" value="ECO:0007669"/>
    <property type="project" value="UniProtKB-UniRule"/>
</dbReference>
<dbReference type="GO" id="GO:0009245">
    <property type="term" value="P:lipid A biosynthetic process"/>
    <property type="evidence" value="ECO:0007669"/>
    <property type="project" value="UniProtKB-UniRule"/>
</dbReference>
<dbReference type="GO" id="GO:0009103">
    <property type="term" value="P:lipopolysaccharide biosynthetic process"/>
    <property type="evidence" value="ECO:0007669"/>
    <property type="project" value="UniProtKB-UniRule"/>
</dbReference>
<dbReference type="GO" id="GO:0046677">
    <property type="term" value="P:response to antibiotic"/>
    <property type="evidence" value="ECO:0007669"/>
    <property type="project" value="UniProtKB-KW"/>
</dbReference>
<dbReference type="Gene3D" id="3.20.20.370">
    <property type="entry name" value="Glycoside hydrolase/deacetylase"/>
    <property type="match status" value="1"/>
</dbReference>
<dbReference type="HAMAP" id="MF_01870">
    <property type="entry name" value="ArnD"/>
    <property type="match status" value="1"/>
</dbReference>
<dbReference type="InterPro" id="IPR023557">
    <property type="entry name" value="ArnD"/>
</dbReference>
<dbReference type="InterPro" id="IPR011330">
    <property type="entry name" value="Glyco_hydro/deAcase_b/a-brl"/>
</dbReference>
<dbReference type="InterPro" id="IPR002509">
    <property type="entry name" value="NODB_dom"/>
</dbReference>
<dbReference type="InterPro" id="IPR050248">
    <property type="entry name" value="Polysacc_deacetylase_ArnD"/>
</dbReference>
<dbReference type="NCBIfam" id="NF011923">
    <property type="entry name" value="PRK15394.1"/>
    <property type="match status" value="1"/>
</dbReference>
<dbReference type="PANTHER" id="PTHR10587:SF137">
    <property type="entry name" value="4-DEOXY-4-FORMAMIDO-L-ARABINOSE-PHOSPHOUNDECAPRENOL DEFORMYLASE ARND-RELATED"/>
    <property type="match status" value="1"/>
</dbReference>
<dbReference type="PANTHER" id="PTHR10587">
    <property type="entry name" value="GLYCOSYL TRANSFERASE-RELATED"/>
    <property type="match status" value="1"/>
</dbReference>
<dbReference type="Pfam" id="PF01522">
    <property type="entry name" value="Polysacc_deac_1"/>
    <property type="match status" value="1"/>
</dbReference>
<dbReference type="SUPFAM" id="SSF88713">
    <property type="entry name" value="Glycoside hydrolase/deacetylase"/>
    <property type="match status" value="1"/>
</dbReference>
<dbReference type="PROSITE" id="PS51677">
    <property type="entry name" value="NODB"/>
    <property type="match status" value="1"/>
</dbReference>
<comment type="function">
    <text evidence="1">Catalyzes the deformylation of 4-deoxy-4-formamido-L-arabinose-phosphoundecaprenol to 4-amino-4-deoxy-L-arabinose-phosphoundecaprenol. The modified arabinose is attached to lipid A and is required for resistance to polymyxin and cationic antimicrobial peptides.</text>
</comment>
<comment type="catalytic activity">
    <reaction evidence="1">
        <text>4-deoxy-4-formamido-alpha-L-arabinopyranosyl di-trans,octa-cis-undecaprenyl phosphate + H2O = 4-amino-4-deoxy-alpha-L-arabinopyranosyl di-trans,octa-cis-undecaprenyl phosphate + formate</text>
        <dbReference type="Rhea" id="RHEA:27734"/>
        <dbReference type="ChEBI" id="CHEBI:15377"/>
        <dbReference type="ChEBI" id="CHEBI:15740"/>
        <dbReference type="ChEBI" id="CHEBI:58909"/>
        <dbReference type="ChEBI" id="CHEBI:60463"/>
        <dbReference type="EC" id="3.5.1.n3"/>
    </reaction>
</comment>
<comment type="pathway">
    <text evidence="1">Glycolipid biosynthesis; 4-amino-4-deoxy-alpha-L-arabinose undecaprenyl phosphate biosynthesis; 4-amino-4-deoxy-alpha-L-arabinose undecaprenyl phosphate from UDP-4-deoxy-4-formamido-beta-L-arabinose and undecaprenyl phosphate: step 2/2.</text>
</comment>
<comment type="pathway">
    <text evidence="1">Bacterial outer membrane biogenesis; lipopolysaccharide biosynthesis.</text>
</comment>
<comment type="similarity">
    <text evidence="1">Belongs to the polysaccharide deacetylase family. ArnD deformylase subfamily.</text>
</comment>
<proteinExistence type="inferred from homology"/>